<keyword id="KW-0025">Alternative splicing</keyword>
<keyword id="KW-0175">Coiled coil</keyword>
<keyword id="KW-0597">Phosphoprotein</keyword>
<keyword id="KW-1185">Reference proteome</keyword>
<comment type="alternative products">
    <event type="alternative splicing"/>
    <isoform>
        <id>Q8K3I9-1</id>
        <name>1</name>
        <sequence type="displayed"/>
    </isoform>
    <isoform>
        <id>Q8K3I9-2</id>
        <name>2</name>
        <sequence type="described" ref="VSP_021322 VSP_021323"/>
    </isoform>
    <isoform>
        <id>Q8K3I9-3</id>
        <name>3</name>
        <sequence type="described" ref="VSP_021321"/>
    </isoform>
</comment>
<comment type="tissue specificity">
    <text evidence="4">Predominantly expressed in thymus and testis, especially in CD4+CD8+ cells and at specific stages of spermatogenesis.</text>
</comment>
<gene>
    <name type="primary">Glcci1</name>
    <name type="synonym">Gig18</name>
    <name type="synonym">Tssn1</name>
</gene>
<organism>
    <name type="scientific">Mus musculus</name>
    <name type="common">Mouse</name>
    <dbReference type="NCBI Taxonomy" id="10090"/>
    <lineage>
        <taxon>Eukaryota</taxon>
        <taxon>Metazoa</taxon>
        <taxon>Chordata</taxon>
        <taxon>Craniata</taxon>
        <taxon>Vertebrata</taxon>
        <taxon>Euteleostomi</taxon>
        <taxon>Mammalia</taxon>
        <taxon>Eutheria</taxon>
        <taxon>Euarchontoglires</taxon>
        <taxon>Glires</taxon>
        <taxon>Rodentia</taxon>
        <taxon>Myomorpha</taxon>
        <taxon>Muroidea</taxon>
        <taxon>Muridae</taxon>
        <taxon>Murinae</taxon>
        <taxon>Mus</taxon>
        <taxon>Mus</taxon>
    </lineage>
</organism>
<feature type="chain" id="PRO_0000256129" description="Glucocorticoid-induced transcript 1 protein">
    <location>
        <begin position="1"/>
        <end position="537"/>
    </location>
</feature>
<feature type="region of interest" description="Disordered" evidence="3">
    <location>
        <begin position="1"/>
        <end position="45"/>
    </location>
</feature>
<feature type="region of interest" description="Disordered" evidence="3">
    <location>
        <begin position="62"/>
        <end position="254"/>
    </location>
</feature>
<feature type="region of interest" description="Disordered" evidence="3">
    <location>
        <begin position="309"/>
        <end position="407"/>
    </location>
</feature>
<feature type="region of interest" description="Disordered" evidence="3">
    <location>
        <begin position="495"/>
        <end position="520"/>
    </location>
</feature>
<feature type="coiled-coil region" evidence="2">
    <location>
        <begin position="217"/>
        <end position="244"/>
    </location>
</feature>
<feature type="compositionally biased region" description="Low complexity" evidence="3">
    <location>
        <begin position="69"/>
        <end position="86"/>
    </location>
</feature>
<feature type="compositionally biased region" description="Pro residues" evidence="3">
    <location>
        <begin position="97"/>
        <end position="106"/>
    </location>
</feature>
<feature type="compositionally biased region" description="Basic and acidic residues" evidence="3">
    <location>
        <begin position="121"/>
        <end position="136"/>
    </location>
</feature>
<feature type="compositionally biased region" description="Low complexity" evidence="3">
    <location>
        <begin position="152"/>
        <end position="168"/>
    </location>
</feature>
<feature type="compositionally biased region" description="Basic and acidic residues" evidence="3">
    <location>
        <begin position="178"/>
        <end position="192"/>
    </location>
</feature>
<feature type="compositionally biased region" description="Basic and acidic residues" evidence="3">
    <location>
        <begin position="309"/>
        <end position="321"/>
    </location>
</feature>
<feature type="compositionally biased region" description="Polar residues" evidence="3">
    <location>
        <begin position="329"/>
        <end position="346"/>
    </location>
</feature>
<feature type="compositionally biased region" description="Low complexity" evidence="3">
    <location>
        <begin position="347"/>
        <end position="359"/>
    </location>
</feature>
<feature type="modified residue" description="Phosphoserine" evidence="1">
    <location>
        <position position="69"/>
    </location>
</feature>
<feature type="modified residue" description="Phosphoserine" evidence="9">
    <location>
        <position position="96"/>
    </location>
</feature>
<feature type="modified residue" description="Phosphoserine" evidence="9">
    <location>
        <position position="98"/>
    </location>
</feature>
<feature type="modified residue" description="Phosphoserine" evidence="9">
    <location>
        <position position="99"/>
    </location>
</feature>
<feature type="modified residue" description="Phosphothreonine" evidence="9">
    <location>
        <position position="101"/>
    </location>
</feature>
<feature type="modified residue" description="Phosphoserine" evidence="1">
    <location>
        <position position="162"/>
    </location>
</feature>
<feature type="modified residue" description="Phosphoserine" evidence="1">
    <location>
        <position position="163"/>
    </location>
</feature>
<feature type="modified residue" description="Phosphothreonine" evidence="1">
    <location>
        <position position="166"/>
    </location>
</feature>
<feature type="modified residue" description="Phosphothreonine" evidence="1">
    <location>
        <position position="168"/>
    </location>
</feature>
<feature type="modified residue" description="Phosphoserine" evidence="1">
    <location>
        <position position="214"/>
    </location>
</feature>
<feature type="modified residue" description="Phosphoserine" evidence="1">
    <location>
        <position position="248"/>
    </location>
</feature>
<feature type="modified residue" description="Phosphothreonine" evidence="1">
    <location>
        <position position="256"/>
    </location>
</feature>
<feature type="modified residue" description="Phosphoserine" evidence="9">
    <location>
        <position position="293"/>
    </location>
</feature>
<feature type="modified residue" description="Phosphothreonine" evidence="1">
    <location>
        <position position="333"/>
    </location>
</feature>
<feature type="modified residue" description="Phosphoserine" evidence="9">
    <location>
        <position position="335"/>
    </location>
</feature>
<feature type="modified residue" description="Phosphothreonine" evidence="9">
    <location>
        <position position="340"/>
    </location>
</feature>
<feature type="modified residue" description="Phosphoserine" evidence="9">
    <location>
        <position position="384"/>
    </location>
</feature>
<feature type="modified residue" description="Phosphoserine" evidence="1">
    <location>
        <position position="388"/>
    </location>
</feature>
<feature type="modified residue" description="Phosphoserine" evidence="1">
    <location>
        <position position="396"/>
    </location>
</feature>
<feature type="modified residue" description="Phosphoserine" evidence="9">
    <location>
        <position position="402"/>
    </location>
</feature>
<feature type="modified residue" description="Phosphoserine" evidence="1">
    <location>
        <position position="470"/>
    </location>
</feature>
<feature type="splice variant" id="VSP_021321" description="In isoform 3." evidence="5 6">
    <location>
        <begin position="1"/>
        <end position="187"/>
    </location>
</feature>
<feature type="splice variant" id="VSP_021322" description="In isoform 2." evidence="7">
    <location>
        <begin position="1"/>
        <end position="107"/>
    </location>
</feature>
<feature type="splice variant" id="VSP_021323" description="In isoform 2." evidence="7">
    <original>PAEQAPRAKGRPRRSPESRRRSSSPERRSPGSPVCR</original>
    <variation>MCPSPWPHMCWRHRAPSATFLTTYSHTMSATTCPDS</variation>
    <location>
        <begin position="108"/>
        <end position="143"/>
    </location>
</feature>
<feature type="sequence conflict" description="In Ref. 3; AAH50802 and 4; BAC26078." evidence="8" ref="3 4">
    <original>E</original>
    <variation>EQ</variation>
    <location>
        <position position="223"/>
    </location>
</feature>
<dbReference type="EMBL" id="AF374476">
    <property type="protein sequence ID" value="AAK54615.1"/>
    <property type="molecule type" value="mRNA"/>
</dbReference>
<dbReference type="EMBL" id="AY098636">
    <property type="protein sequence ID" value="AAM33072.1"/>
    <property type="molecule type" value="mRNA"/>
</dbReference>
<dbReference type="EMBL" id="BC050802">
    <property type="protein sequence ID" value="AAH50802.1"/>
    <property type="molecule type" value="mRNA"/>
</dbReference>
<dbReference type="EMBL" id="AK028709">
    <property type="protein sequence ID" value="BAC26078.1"/>
    <property type="molecule type" value="mRNA"/>
</dbReference>
<dbReference type="CCDS" id="CCDS71725.1">
    <molecule id="Q8K3I9-3"/>
</dbReference>
<dbReference type="RefSeq" id="NP_001273657.1">
    <property type="nucleotide sequence ID" value="NM_001286728.1"/>
</dbReference>
<dbReference type="RefSeq" id="NP_001273658.1">
    <molecule id="Q8K3I9-3"/>
    <property type="nucleotide sequence ID" value="NM_001286729.1"/>
</dbReference>
<dbReference type="RefSeq" id="NP_573499.2">
    <property type="nucleotide sequence ID" value="NM_133236.3"/>
</dbReference>
<dbReference type="SMR" id="Q8K3I9"/>
<dbReference type="FunCoup" id="Q8K3I9">
    <property type="interactions" value="1528"/>
</dbReference>
<dbReference type="STRING" id="10090.ENSMUSP00000069444"/>
<dbReference type="GlyGen" id="Q8K3I9">
    <property type="glycosylation" value="1 site"/>
</dbReference>
<dbReference type="iPTMnet" id="Q8K3I9"/>
<dbReference type="PhosphoSitePlus" id="Q8K3I9"/>
<dbReference type="jPOST" id="Q8K3I9"/>
<dbReference type="PaxDb" id="10090-ENSMUSP00000069444"/>
<dbReference type="PeptideAtlas" id="Q8K3I9"/>
<dbReference type="ProteomicsDB" id="267630">
    <molecule id="Q8K3I9-1"/>
</dbReference>
<dbReference type="ProteomicsDB" id="267631">
    <molecule id="Q8K3I9-2"/>
</dbReference>
<dbReference type="ProteomicsDB" id="267632">
    <molecule id="Q8K3I9-3"/>
</dbReference>
<dbReference type="Antibodypedia" id="945">
    <property type="antibodies" value="180 antibodies from 21 providers"/>
</dbReference>
<dbReference type="DNASU" id="170772"/>
<dbReference type="Ensembl" id="ENSMUST00000161217.8">
    <molecule id="Q8K3I9-3"/>
    <property type="protein sequence ID" value="ENSMUSP00000124167.2"/>
    <property type="gene ID" value="ENSMUSG00000029638.18"/>
</dbReference>
<dbReference type="GeneID" id="170772"/>
<dbReference type="KEGG" id="mmu:170772"/>
<dbReference type="UCSC" id="uc009axn.3">
    <molecule id="Q8K3I9-2"/>
    <property type="organism name" value="mouse"/>
</dbReference>
<dbReference type="UCSC" id="uc009axu.2">
    <molecule id="Q8K3I9-1"/>
    <property type="organism name" value="mouse"/>
</dbReference>
<dbReference type="UCSC" id="uc009axw.1">
    <molecule id="Q8K3I9-3"/>
    <property type="organism name" value="mouse"/>
</dbReference>
<dbReference type="AGR" id="MGI:2179717"/>
<dbReference type="CTD" id="113263"/>
<dbReference type="MGI" id="MGI:2179717">
    <property type="gene designation" value="Glcci1"/>
</dbReference>
<dbReference type="VEuPathDB" id="HostDB:ENSMUSG00000029638"/>
<dbReference type="eggNOG" id="ENOG502QRQF">
    <property type="taxonomic scope" value="Eukaryota"/>
</dbReference>
<dbReference type="GeneTree" id="ENSGT00950000183046"/>
<dbReference type="InParanoid" id="Q8K3I9"/>
<dbReference type="OrthoDB" id="10037581at2759"/>
<dbReference type="PhylomeDB" id="Q8K3I9"/>
<dbReference type="BioGRID-ORCS" id="170772">
    <property type="hits" value="0 hits in 77 CRISPR screens"/>
</dbReference>
<dbReference type="ChiTaRS" id="Glcci1">
    <property type="organism name" value="mouse"/>
</dbReference>
<dbReference type="PRO" id="PR:Q8K3I9"/>
<dbReference type="Proteomes" id="UP000000589">
    <property type="component" value="Chromosome 6"/>
</dbReference>
<dbReference type="RNAct" id="Q8K3I9">
    <property type="molecule type" value="protein"/>
</dbReference>
<dbReference type="Bgee" id="ENSMUSG00000029638">
    <property type="expression patterns" value="Expressed in animal zygote and 87 other cell types or tissues"/>
</dbReference>
<dbReference type="ExpressionAtlas" id="Q8K3I9">
    <property type="expression patterns" value="baseline and differential"/>
</dbReference>
<dbReference type="GO" id="GO:0005737">
    <property type="term" value="C:cytoplasm"/>
    <property type="evidence" value="ECO:0000314"/>
    <property type="project" value="MGI"/>
</dbReference>
<dbReference type="InterPro" id="IPR026642">
    <property type="entry name" value="Glcci1/FAM117"/>
</dbReference>
<dbReference type="PANTHER" id="PTHR14972">
    <property type="entry name" value="AGAP011572-PA"/>
    <property type="match status" value="1"/>
</dbReference>
<dbReference type="PANTHER" id="PTHR14972:SF3">
    <property type="entry name" value="GLUCOCORTICOID-INDUCED TRANSCRIPT 1 PROTEIN"/>
    <property type="match status" value="1"/>
</dbReference>
<dbReference type="Pfam" id="PF15388">
    <property type="entry name" value="FAM117"/>
    <property type="match status" value="1"/>
</dbReference>
<proteinExistence type="evidence at protein level"/>
<name>GLCI1_MOUSE</name>
<sequence length="537" mass="57479">MSTASSSSSQTPHSAPQRMRRSTAGSPPAAAGSGTGPAGSCAPAAGAGRLLQPIRATVPYQLLRGSQHSPTRPAAAATAAAALGSLSGPGGARGPSPSSPTPPPAAAPAEQAPRAKGRPRRSPESRRRSSSPERRSPGSPVCRVDRPKSQHIRTSSTIRRTSSLDTITGPYLTGQWPRDPHVHYPSCMRDKATQTPSCWAEEGAEKRSHQRSASWGSADQLKEIAKLRQQLQRSKQSSRHSKEKDRQSPLHGNHITISHTQAIGSRSVPMPLSNISVPKSSVSRVPCNVEGISPELEKVFIKENNGKEEVSKPLDIPDGRRAPLPAHYRSSSTRSIDTQTPSVQERSSSCSSHSPCVSPFCPPESQDGSPCSTEDLLYDRDKDSGSSSPLPKYASSPKPNNSYMFKREPPEGCERVKVFEEMASRQPISAPLFSCPDKNKVNFIPTGSAFCPVKLLGPLLPASDLMLKNSPNSGQSSALATLTVEQLSSRVSFTSLSDDTSTADSLEPSAQQPSQQQQLLQDLQVEEHVSTQNYVMI</sequence>
<reference key="1">
    <citation type="submission" date="2001-04" db="EMBL/GenBank/DDBJ databases">
        <title>Characterization of a glucocorticoid-regulated gene in immature thymocytes.</title>
        <authorList>
            <person name="Leptich T.D."/>
            <person name="Flomerfelt F.A."/>
            <person name="Chapman M.S."/>
            <person name="Miesfeld R.L."/>
        </authorList>
    </citation>
    <scope>NUCLEOTIDE SEQUENCE [MRNA] (ISOFORM 2)</scope>
</reference>
<reference key="2">
    <citation type="journal article" date="2003" name="Immunogenetics">
        <title>Two genes, three messengers: hybrid transcript between a gene expressed at specific stages of T-cell and sperm maturation and an unrelated adjacent gene.</title>
        <authorList>
            <person name="Miazek A."/>
            <person name="Malissen B."/>
        </authorList>
    </citation>
    <scope>NUCLEOTIDE SEQUENCE [MRNA] (ISOFORM 1)</scope>
    <scope>TISSUE SPECIFICITY</scope>
    <source>
        <strain>C57BL/6J</strain>
        <tissue>Thymus</tissue>
    </source>
</reference>
<reference key="3">
    <citation type="journal article" date="2004" name="Genome Res.">
        <title>The status, quality, and expansion of the NIH full-length cDNA project: the Mammalian Gene Collection (MGC).</title>
        <authorList>
            <consortium name="The MGC Project Team"/>
        </authorList>
    </citation>
    <scope>NUCLEOTIDE SEQUENCE [LARGE SCALE MRNA] (ISOFORM 3)</scope>
    <source>
        <tissue>Testis</tissue>
    </source>
</reference>
<reference key="4">
    <citation type="journal article" date="2005" name="Science">
        <title>The transcriptional landscape of the mammalian genome.</title>
        <authorList>
            <person name="Carninci P."/>
            <person name="Kasukawa T."/>
            <person name="Katayama S."/>
            <person name="Gough J."/>
            <person name="Frith M.C."/>
            <person name="Maeda N."/>
            <person name="Oyama R."/>
            <person name="Ravasi T."/>
            <person name="Lenhard B."/>
            <person name="Wells C."/>
            <person name="Kodzius R."/>
            <person name="Shimokawa K."/>
            <person name="Bajic V.B."/>
            <person name="Brenner S.E."/>
            <person name="Batalov S."/>
            <person name="Forrest A.R."/>
            <person name="Zavolan M."/>
            <person name="Davis M.J."/>
            <person name="Wilming L.G."/>
            <person name="Aidinis V."/>
            <person name="Allen J.E."/>
            <person name="Ambesi-Impiombato A."/>
            <person name="Apweiler R."/>
            <person name="Aturaliya R.N."/>
            <person name="Bailey T.L."/>
            <person name="Bansal M."/>
            <person name="Baxter L."/>
            <person name="Beisel K.W."/>
            <person name="Bersano T."/>
            <person name="Bono H."/>
            <person name="Chalk A.M."/>
            <person name="Chiu K.P."/>
            <person name="Choudhary V."/>
            <person name="Christoffels A."/>
            <person name="Clutterbuck D.R."/>
            <person name="Crowe M.L."/>
            <person name="Dalla E."/>
            <person name="Dalrymple B.P."/>
            <person name="de Bono B."/>
            <person name="Della Gatta G."/>
            <person name="di Bernardo D."/>
            <person name="Down T."/>
            <person name="Engstrom P."/>
            <person name="Fagiolini M."/>
            <person name="Faulkner G."/>
            <person name="Fletcher C.F."/>
            <person name="Fukushima T."/>
            <person name="Furuno M."/>
            <person name="Futaki S."/>
            <person name="Gariboldi M."/>
            <person name="Georgii-Hemming P."/>
            <person name="Gingeras T.R."/>
            <person name="Gojobori T."/>
            <person name="Green R.E."/>
            <person name="Gustincich S."/>
            <person name="Harbers M."/>
            <person name="Hayashi Y."/>
            <person name="Hensch T.K."/>
            <person name="Hirokawa N."/>
            <person name="Hill D."/>
            <person name="Huminiecki L."/>
            <person name="Iacono M."/>
            <person name="Ikeo K."/>
            <person name="Iwama A."/>
            <person name="Ishikawa T."/>
            <person name="Jakt M."/>
            <person name="Kanapin A."/>
            <person name="Katoh M."/>
            <person name="Kawasawa Y."/>
            <person name="Kelso J."/>
            <person name="Kitamura H."/>
            <person name="Kitano H."/>
            <person name="Kollias G."/>
            <person name="Krishnan S.P."/>
            <person name="Kruger A."/>
            <person name="Kummerfeld S.K."/>
            <person name="Kurochkin I.V."/>
            <person name="Lareau L.F."/>
            <person name="Lazarevic D."/>
            <person name="Lipovich L."/>
            <person name="Liu J."/>
            <person name="Liuni S."/>
            <person name="McWilliam S."/>
            <person name="Madan Babu M."/>
            <person name="Madera M."/>
            <person name="Marchionni L."/>
            <person name="Matsuda H."/>
            <person name="Matsuzawa S."/>
            <person name="Miki H."/>
            <person name="Mignone F."/>
            <person name="Miyake S."/>
            <person name="Morris K."/>
            <person name="Mottagui-Tabar S."/>
            <person name="Mulder N."/>
            <person name="Nakano N."/>
            <person name="Nakauchi H."/>
            <person name="Ng P."/>
            <person name="Nilsson R."/>
            <person name="Nishiguchi S."/>
            <person name="Nishikawa S."/>
            <person name="Nori F."/>
            <person name="Ohara O."/>
            <person name="Okazaki Y."/>
            <person name="Orlando V."/>
            <person name="Pang K.C."/>
            <person name="Pavan W.J."/>
            <person name="Pavesi G."/>
            <person name="Pesole G."/>
            <person name="Petrovsky N."/>
            <person name="Piazza S."/>
            <person name="Reed J."/>
            <person name="Reid J.F."/>
            <person name="Ring B.Z."/>
            <person name="Ringwald M."/>
            <person name="Rost B."/>
            <person name="Ruan Y."/>
            <person name="Salzberg S.L."/>
            <person name="Sandelin A."/>
            <person name="Schneider C."/>
            <person name="Schoenbach C."/>
            <person name="Sekiguchi K."/>
            <person name="Semple C.A."/>
            <person name="Seno S."/>
            <person name="Sessa L."/>
            <person name="Sheng Y."/>
            <person name="Shibata Y."/>
            <person name="Shimada H."/>
            <person name="Shimada K."/>
            <person name="Silva D."/>
            <person name="Sinclair B."/>
            <person name="Sperling S."/>
            <person name="Stupka E."/>
            <person name="Sugiura K."/>
            <person name="Sultana R."/>
            <person name="Takenaka Y."/>
            <person name="Taki K."/>
            <person name="Tammoja K."/>
            <person name="Tan S.L."/>
            <person name="Tang S."/>
            <person name="Taylor M.S."/>
            <person name="Tegner J."/>
            <person name="Teichmann S.A."/>
            <person name="Ueda H.R."/>
            <person name="van Nimwegen E."/>
            <person name="Verardo R."/>
            <person name="Wei C.L."/>
            <person name="Yagi K."/>
            <person name="Yamanishi H."/>
            <person name="Zabarovsky E."/>
            <person name="Zhu S."/>
            <person name="Zimmer A."/>
            <person name="Hide W."/>
            <person name="Bult C."/>
            <person name="Grimmond S.M."/>
            <person name="Teasdale R.D."/>
            <person name="Liu E.T."/>
            <person name="Brusic V."/>
            <person name="Quackenbush J."/>
            <person name="Wahlestedt C."/>
            <person name="Mattick J.S."/>
            <person name="Hume D.A."/>
            <person name="Kai C."/>
            <person name="Sasaki D."/>
            <person name="Tomaru Y."/>
            <person name="Fukuda S."/>
            <person name="Kanamori-Katayama M."/>
            <person name="Suzuki M."/>
            <person name="Aoki J."/>
            <person name="Arakawa T."/>
            <person name="Iida J."/>
            <person name="Imamura K."/>
            <person name="Itoh M."/>
            <person name="Kato T."/>
            <person name="Kawaji H."/>
            <person name="Kawagashira N."/>
            <person name="Kawashima T."/>
            <person name="Kojima M."/>
            <person name="Kondo S."/>
            <person name="Konno H."/>
            <person name="Nakano K."/>
            <person name="Ninomiya N."/>
            <person name="Nishio T."/>
            <person name="Okada M."/>
            <person name="Plessy C."/>
            <person name="Shibata K."/>
            <person name="Shiraki T."/>
            <person name="Suzuki S."/>
            <person name="Tagami M."/>
            <person name="Waki K."/>
            <person name="Watahiki A."/>
            <person name="Okamura-Oho Y."/>
            <person name="Suzuki H."/>
            <person name="Kawai J."/>
            <person name="Hayashizaki Y."/>
        </authorList>
    </citation>
    <scope>NUCLEOTIDE SEQUENCE [LARGE SCALE MRNA] OF 1-423 (ISOFORM 3)</scope>
    <source>
        <strain>C57BL/6J</strain>
        <tissue>Skin</tissue>
    </source>
</reference>
<reference key="5">
    <citation type="journal article" date="2004" name="Mol. Cell. Proteomics">
        <title>Phosphoproteomic analysis of the developing mouse brain.</title>
        <authorList>
            <person name="Ballif B.A."/>
            <person name="Villen J."/>
            <person name="Beausoleil S.A."/>
            <person name="Schwartz D."/>
            <person name="Gygi S.P."/>
        </authorList>
    </citation>
    <scope>IDENTIFICATION BY MASS SPECTROMETRY [LARGE SCALE ANALYSIS]</scope>
    <source>
        <tissue>Embryonic brain</tissue>
    </source>
</reference>
<reference key="6">
    <citation type="journal article" date="2010" name="Cell">
        <title>A tissue-specific atlas of mouse protein phosphorylation and expression.</title>
        <authorList>
            <person name="Huttlin E.L."/>
            <person name="Jedrychowski M.P."/>
            <person name="Elias J.E."/>
            <person name="Goswami T."/>
            <person name="Rad R."/>
            <person name="Beausoleil S.A."/>
            <person name="Villen J."/>
            <person name="Haas W."/>
            <person name="Sowa M.E."/>
            <person name="Gygi S.P."/>
        </authorList>
    </citation>
    <scope>PHOSPHORYLATION [LARGE SCALE ANALYSIS] AT SER-96; SER-98; SER-99; THR-101; SER-293; SER-335; THR-340; SER-384 AND SER-402</scope>
    <scope>IDENTIFICATION BY MASS SPECTROMETRY [LARGE SCALE ANALYSIS]</scope>
    <source>
        <tissue>Brain</tissue>
        <tissue>Brown adipose tissue</tissue>
        <tissue>Heart</tissue>
        <tissue>Kidney</tissue>
        <tissue>Lung</tissue>
        <tissue>Pancreas</tissue>
        <tissue>Spleen</tissue>
        <tissue>Testis</tissue>
    </source>
</reference>
<protein>
    <recommendedName>
        <fullName>Glucocorticoid-induced transcript 1 protein</fullName>
    </recommendedName>
    <alternativeName>
        <fullName>Glucocorticoid-induced gene 18 protein</fullName>
    </alternativeName>
    <alternativeName>
        <fullName>Testhymin</fullName>
    </alternativeName>
    <alternativeName>
        <fullName>Thymocyte/spermatocyte selection protein 1</fullName>
    </alternativeName>
</protein>
<accession>Q8K3I9</accession>
<accession>Q80YT1</accession>
<accession>Q8CEA5</accession>
<accession>Q925C1</accession>
<evidence type="ECO:0000250" key="1">
    <source>
        <dbReference type="UniProtKB" id="Q86VQ1"/>
    </source>
</evidence>
<evidence type="ECO:0000255" key="2"/>
<evidence type="ECO:0000256" key="3">
    <source>
        <dbReference type="SAM" id="MobiDB-lite"/>
    </source>
</evidence>
<evidence type="ECO:0000269" key="4">
    <source>
    </source>
</evidence>
<evidence type="ECO:0000303" key="5">
    <source>
    </source>
</evidence>
<evidence type="ECO:0000303" key="6">
    <source>
    </source>
</evidence>
<evidence type="ECO:0000303" key="7">
    <source ref="1"/>
</evidence>
<evidence type="ECO:0000305" key="8"/>
<evidence type="ECO:0007744" key="9">
    <source>
    </source>
</evidence>